<keyword id="KW-0687">Ribonucleoprotein</keyword>
<keyword id="KW-0689">Ribosomal protein</keyword>
<accession>Q73FB2</accession>
<sequence>MRKKVVLSCEECKNRNYSTMKDTSSVERLEIKKFCKTCNQHTVHKETK</sequence>
<dbReference type="EMBL" id="AE017194">
    <property type="protein sequence ID" value="AAS39030.1"/>
    <property type="molecule type" value="Genomic_DNA"/>
</dbReference>
<dbReference type="SMR" id="Q73FB2"/>
<dbReference type="KEGG" id="bca:BCE_0094"/>
<dbReference type="HOGENOM" id="CLU_190949_0_1_9"/>
<dbReference type="Proteomes" id="UP000002527">
    <property type="component" value="Chromosome"/>
</dbReference>
<dbReference type="GO" id="GO:0005737">
    <property type="term" value="C:cytoplasm"/>
    <property type="evidence" value="ECO:0007669"/>
    <property type="project" value="UniProtKB-ARBA"/>
</dbReference>
<dbReference type="GO" id="GO:1990904">
    <property type="term" value="C:ribonucleoprotein complex"/>
    <property type="evidence" value="ECO:0007669"/>
    <property type="project" value="UniProtKB-KW"/>
</dbReference>
<dbReference type="GO" id="GO:0005840">
    <property type="term" value="C:ribosome"/>
    <property type="evidence" value="ECO:0007669"/>
    <property type="project" value="UniProtKB-KW"/>
</dbReference>
<dbReference type="GO" id="GO:0003735">
    <property type="term" value="F:structural constituent of ribosome"/>
    <property type="evidence" value="ECO:0007669"/>
    <property type="project" value="InterPro"/>
</dbReference>
<dbReference type="GO" id="GO:0006412">
    <property type="term" value="P:translation"/>
    <property type="evidence" value="ECO:0007669"/>
    <property type="project" value="UniProtKB-UniRule"/>
</dbReference>
<dbReference type="Gene3D" id="2.20.28.120">
    <property type="entry name" value="Ribosomal protein L33"/>
    <property type="match status" value="1"/>
</dbReference>
<dbReference type="HAMAP" id="MF_00294">
    <property type="entry name" value="Ribosomal_bL33"/>
    <property type="match status" value="1"/>
</dbReference>
<dbReference type="InterPro" id="IPR001705">
    <property type="entry name" value="Ribosomal_bL33"/>
</dbReference>
<dbReference type="InterPro" id="IPR038584">
    <property type="entry name" value="Ribosomal_bL33_sf"/>
</dbReference>
<dbReference type="InterPro" id="IPR011332">
    <property type="entry name" value="Ribosomal_zn-bd"/>
</dbReference>
<dbReference type="NCBIfam" id="NF001764">
    <property type="entry name" value="PRK00504.1"/>
    <property type="match status" value="1"/>
</dbReference>
<dbReference type="NCBIfam" id="NF001860">
    <property type="entry name" value="PRK00595.1"/>
    <property type="match status" value="1"/>
</dbReference>
<dbReference type="NCBIfam" id="TIGR01023">
    <property type="entry name" value="rpmG_bact"/>
    <property type="match status" value="1"/>
</dbReference>
<dbReference type="Pfam" id="PF00471">
    <property type="entry name" value="Ribosomal_L33"/>
    <property type="match status" value="1"/>
</dbReference>
<dbReference type="SUPFAM" id="SSF57829">
    <property type="entry name" value="Zn-binding ribosomal proteins"/>
    <property type="match status" value="1"/>
</dbReference>
<gene>
    <name evidence="1" type="primary">rpmG1</name>
    <name type="ordered locus">BCE_0094</name>
</gene>
<feature type="chain" id="PRO_0000356383" description="Large ribosomal subunit protein bL33A">
    <location>
        <begin position="1"/>
        <end position="48"/>
    </location>
</feature>
<organism>
    <name type="scientific">Bacillus cereus (strain ATCC 10987 / NRS 248)</name>
    <dbReference type="NCBI Taxonomy" id="222523"/>
    <lineage>
        <taxon>Bacteria</taxon>
        <taxon>Bacillati</taxon>
        <taxon>Bacillota</taxon>
        <taxon>Bacilli</taxon>
        <taxon>Bacillales</taxon>
        <taxon>Bacillaceae</taxon>
        <taxon>Bacillus</taxon>
        <taxon>Bacillus cereus group</taxon>
    </lineage>
</organism>
<reference key="1">
    <citation type="journal article" date="2004" name="Nucleic Acids Res.">
        <title>The genome sequence of Bacillus cereus ATCC 10987 reveals metabolic adaptations and a large plasmid related to Bacillus anthracis pXO1.</title>
        <authorList>
            <person name="Rasko D.A."/>
            <person name="Ravel J."/>
            <person name="Oekstad O.A."/>
            <person name="Helgason E."/>
            <person name="Cer R.Z."/>
            <person name="Jiang L."/>
            <person name="Shores K.A."/>
            <person name="Fouts D.E."/>
            <person name="Tourasse N.J."/>
            <person name="Angiuoli S.V."/>
            <person name="Kolonay J.F."/>
            <person name="Nelson W.C."/>
            <person name="Kolstoe A.-B."/>
            <person name="Fraser C.M."/>
            <person name="Read T.D."/>
        </authorList>
    </citation>
    <scope>NUCLEOTIDE SEQUENCE [LARGE SCALE GENOMIC DNA]</scope>
    <source>
        <strain>ATCC 10987 / NRS 248</strain>
    </source>
</reference>
<name>RL331_BACC1</name>
<comment type="similarity">
    <text evidence="1">Belongs to the bacterial ribosomal protein bL33 family.</text>
</comment>
<protein>
    <recommendedName>
        <fullName evidence="1">Large ribosomal subunit protein bL33A</fullName>
    </recommendedName>
    <alternativeName>
        <fullName evidence="1">50S ribosomal protein L33 1</fullName>
    </alternativeName>
</protein>
<proteinExistence type="inferred from homology"/>
<evidence type="ECO:0000255" key="1">
    <source>
        <dbReference type="HAMAP-Rule" id="MF_00294"/>
    </source>
</evidence>